<organism>
    <name type="scientific">Bacillus cereus (strain 03BB102)</name>
    <dbReference type="NCBI Taxonomy" id="572264"/>
    <lineage>
        <taxon>Bacteria</taxon>
        <taxon>Bacillati</taxon>
        <taxon>Bacillota</taxon>
        <taxon>Bacilli</taxon>
        <taxon>Bacillales</taxon>
        <taxon>Bacillaceae</taxon>
        <taxon>Bacillus</taxon>
        <taxon>Bacillus cereus group</taxon>
    </lineage>
</organism>
<name>NTPPA_BACC3</name>
<sequence>MRKIILASGSPRRKELLELAGVPFEIIVSEVEETIGAYSSPSDIVMSLALQKASAVAENNSDHIVLGADTIVTYESRILGKPSNEAEAKEMLQLLSGKTHEVYTGVAIIAKDKTVTFYERTEVTFWELTEEEIDAYVASKEPLDKAGSYGIQGKGSIFVQHIQGDYYSVVGLPISRLVRELKQFNIDVTHA</sequence>
<comment type="function">
    <text evidence="1">Nucleoside triphosphate pyrophosphatase that hydrolyzes dTTP and UTP. May have a dual role in cell division arrest and in preventing the incorporation of modified nucleotides into cellular nucleic acids.</text>
</comment>
<comment type="catalytic activity">
    <reaction evidence="1">
        <text>dTTP + H2O = dTMP + diphosphate + H(+)</text>
        <dbReference type="Rhea" id="RHEA:28534"/>
        <dbReference type="ChEBI" id="CHEBI:15377"/>
        <dbReference type="ChEBI" id="CHEBI:15378"/>
        <dbReference type="ChEBI" id="CHEBI:33019"/>
        <dbReference type="ChEBI" id="CHEBI:37568"/>
        <dbReference type="ChEBI" id="CHEBI:63528"/>
        <dbReference type="EC" id="3.6.1.9"/>
    </reaction>
</comment>
<comment type="catalytic activity">
    <reaction evidence="1">
        <text>UTP + H2O = UMP + diphosphate + H(+)</text>
        <dbReference type="Rhea" id="RHEA:29395"/>
        <dbReference type="ChEBI" id="CHEBI:15377"/>
        <dbReference type="ChEBI" id="CHEBI:15378"/>
        <dbReference type="ChEBI" id="CHEBI:33019"/>
        <dbReference type="ChEBI" id="CHEBI:46398"/>
        <dbReference type="ChEBI" id="CHEBI:57865"/>
        <dbReference type="EC" id="3.6.1.9"/>
    </reaction>
</comment>
<comment type="cofactor">
    <cofactor evidence="1">
        <name>a divalent metal cation</name>
        <dbReference type="ChEBI" id="CHEBI:60240"/>
    </cofactor>
</comment>
<comment type="subcellular location">
    <subcellularLocation>
        <location evidence="1">Cytoplasm</location>
    </subcellularLocation>
</comment>
<comment type="similarity">
    <text evidence="1">Belongs to the Maf family. YhdE subfamily.</text>
</comment>
<gene>
    <name type="primary">maf</name>
    <name type="ordered locus">BCA_4567</name>
</gene>
<evidence type="ECO:0000255" key="1">
    <source>
        <dbReference type="HAMAP-Rule" id="MF_00528"/>
    </source>
</evidence>
<keyword id="KW-0963">Cytoplasm</keyword>
<keyword id="KW-0378">Hydrolase</keyword>
<keyword id="KW-0546">Nucleotide metabolism</keyword>
<feature type="chain" id="PRO_1000146281" description="dTTP/UTP pyrophosphatase">
    <location>
        <begin position="1"/>
        <end position="191"/>
    </location>
</feature>
<feature type="active site" description="Proton acceptor" evidence="1">
    <location>
        <position position="69"/>
    </location>
</feature>
<feature type="site" description="Important for substrate specificity" evidence="1">
    <location>
        <position position="12"/>
    </location>
</feature>
<feature type="site" description="Important for substrate specificity" evidence="1">
    <location>
        <position position="70"/>
    </location>
</feature>
<feature type="site" description="Important for substrate specificity" evidence="1">
    <location>
        <position position="152"/>
    </location>
</feature>
<protein>
    <recommendedName>
        <fullName evidence="1">dTTP/UTP pyrophosphatase</fullName>
        <shortName evidence="1">dTTPase/UTPase</shortName>
        <ecNumber evidence="1">3.6.1.9</ecNumber>
    </recommendedName>
    <alternativeName>
        <fullName evidence="1">Nucleoside triphosphate pyrophosphatase</fullName>
    </alternativeName>
    <alternativeName>
        <fullName evidence="1">Nucleotide pyrophosphatase</fullName>
        <shortName evidence="1">Nucleotide PPase</shortName>
    </alternativeName>
</protein>
<proteinExistence type="inferred from homology"/>
<reference key="1">
    <citation type="submission" date="2009-02" db="EMBL/GenBank/DDBJ databases">
        <title>Genome sequence of Bacillus cereus 03BB102.</title>
        <authorList>
            <person name="Dodson R.J."/>
            <person name="Jackson P."/>
            <person name="Munk A.C."/>
            <person name="Brettin T."/>
            <person name="Bruce D."/>
            <person name="Detter C."/>
            <person name="Tapia R."/>
            <person name="Han C."/>
            <person name="Sutton G."/>
            <person name="Sims D."/>
        </authorList>
    </citation>
    <scope>NUCLEOTIDE SEQUENCE [LARGE SCALE GENOMIC DNA]</scope>
    <source>
        <strain>03BB102</strain>
    </source>
</reference>
<dbReference type="EC" id="3.6.1.9" evidence="1"/>
<dbReference type="EMBL" id="CP001407">
    <property type="protein sequence ID" value="ACO26160.1"/>
    <property type="molecule type" value="Genomic_DNA"/>
</dbReference>
<dbReference type="RefSeq" id="WP_001226272.1">
    <property type="nucleotide sequence ID" value="NZ_CP009318.1"/>
</dbReference>
<dbReference type="SMR" id="C1ETQ1"/>
<dbReference type="KEGG" id="bcx:BCA_4567"/>
<dbReference type="PATRIC" id="fig|572264.18.peg.4515"/>
<dbReference type="Proteomes" id="UP000002210">
    <property type="component" value="Chromosome"/>
</dbReference>
<dbReference type="GO" id="GO:0005737">
    <property type="term" value="C:cytoplasm"/>
    <property type="evidence" value="ECO:0007669"/>
    <property type="project" value="UniProtKB-SubCell"/>
</dbReference>
<dbReference type="GO" id="GO:0036218">
    <property type="term" value="F:dTTP diphosphatase activity"/>
    <property type="evidence" value="ECO:0007669"/>
    <property type="project" value="RHEA"/>
</dbReference>
<dbReference type="GO" id="GO:0036221">
    <property type="term" value="F:UTP diphosphatase activity"/>
    <property type="evidence" value="ECO:0007669"/>
    <property type="project" value="RHEA"/>
</dbReference>
<dbReference type="GO" id="GO:0009117">
    <property type="term" value="P:nucleotide metabolic process"/>
    <property type="evidence" value="ECO:0007669"/>
    <property type="project" value="UniProtKB-KW"/>
</dbReference>
<dbReference type="CDD" id="cd00555">
    <property type="entry name" value="Maf"/>
    <property type="match status" value="1"/>
</dbReference>
<dbReference type="FunFam" id="3.90.950.10:FF:000007">
    <property type="entry name" value="dTTP/UTP pyrophosphatase"/>
    <property type="match status" value="1"/>
</dbReference>
<dbReference type="Gene3D" id="3.90.950.10">
    <property type="match status" value="1"/>
</dbReference>
<dbReference type="HAMAP" id="MF_00528">
    <property type="entry name" value="Maf"/>
    <property type="match status" value="1"/>
</dbReference>
<dbReference type="InterPro" id="IPR029001">
    <property type="entry name" value="ITPase-like_fam"/>
</dbReference>
<dbReference type="InterPro" id="IPR003697">
    <property type="entry name" value="Maf-like"/>
</dbReference>
<dbReference type="NCBIfam" id="TIGR00172">
    <property type="entry name" value="maf"/>
    <property type="match status" value="1"/>
</dbReference>
<dbReference type="PANTHER" id="PTHR43213">
    <property type="entry name" value="BIFUNCTIONAL DTTP/UTP PYROPHOSPHATASE/METHYLTRANSFERASE PROTEIN-RELATED"/>
    <property type="match status" value="1"/>
</dbReference>
<dbReference type="PANTHER" id="PTHR43213:SF5">
    <property type="entry name" value="BIFUNCTIONAL DTTP_UTP PYROPHOSPHATASE_METHYLTRANSFERASE PROTEIN-RELATED"/>
    <property type="match status" value="1"/>
</dbReference>
<dbReference type="Pfam" id="PF02545">
    <property type="entry name" value="Maf"/>
    <property type="match status" value="1"/>
</dbReference>
<dbReference type="PIRSF" id="PIRSF006305">
    <property type="entry name" value="Maf"/>
    <property type="match status" value="1"/>
</dbReference>
<dbReference type="SUPFAM" id="SSF52972">
    <property type="entry name" value="ITPase-like"/>
    <property type="match status" value="1"/>
</dbReference>
<accession>C1ETQ1</accession>